<feature type="chain" id="PRO_0000147842" description="Phosphoglucosamine mutase">
    <location>
        <begin position="1"/>
        <end position="448"/>
    </location>
</feature>
<feature type="active site" description="Phosphoserine intermediate" evidence="1">
    <location>
        <position position="100"/>
    </location>
</feature>
<feature type="binding site" description="via phosphate group" evidence="1">
    <location>
        <position position="100"/>
    </location>
    <ligand>
        <name>Mg(2+)</name>
        <dbReference type="ChEBI" id="CHEBI:18420"/>
    </ligand>
</feature>
<feature type="binding site" evidence="1">
    <location>
        <position position="240"/>
    </location>
    <ligand>
        <name>Mg(2+)</name>
        <dbReference type="ChEBI" id="CHEBI:18420"/>
    </ligand>
</feature>
<feature type="binding site" evidence="1">
    <location>
        <position position="242"/>
    </location>
    <ligand>
        <name>Mg(2+)</name>
        <dbReference type="ChEBI" id="CHEBI:18420"/>
    </ligand>
</feature>
<feature type="binding site" evidence="1">
    <location>
        <position position="244"/>
    </location>
    <ligand>
        <name>Mg(2+)</name>
        <dbReference type="ChEBI" id="CHEBI:18420"/>
    </ligand>
</feature>
<feature type="modified residue" description="Phosphoserine" evidence="1">
    <location>
        <position position="100"/>
    </location>
</feature>
<organism>
    <name type="scientific">Bacillus cereus (strain ZK / E33L)</name>
    <dbReference type="NCBI Taxonomy" id="288681"/>
    <lineage>
        <taxon>Bacteria</taxon>
        <taxon>Bacillati</taxon>
        <taxon>Bacillota</taxon>
        <taxon>Bacilli</taxon>
        <taxon>Bacillales</taxon>
        <taxon>Bacillaceae</taxon>
        <taxon>Bacillus</taxon>
        <taxon>Bacillus cereus group</taxon>
    </lineage>
</organism>
<dbReference type="EC" id="5.4.2.10" evidence="1"/>
<dbReference type="EMBL" id="CP000001">
    <property type="protein sequence ID" value="AAU20082.1"/>
    <property type="molecule type" value="Genomic_DNA"/>
</dbReference>
<dbReference type="RefSeq" id="WP_000521474.1">
    <property type="nucleotide sequence ID" value="NZ_CP009968.1"/>
</dbReference>
<dbReference type="SMR" id="Q63H45"/>
<dbReference type="GeneID" id="75083449"/>
<dbReference type="KEGG" id="bcz:BCE33L0150"/>
<dbReference type="PATRIC" id="fig|288681.22.peg.5478"/>
<dbReference type="Proteomes" id="UP000002612">
    <property type="component" value="Chromosome"/>
</dbReference>
<dbReference type="GO" id="GO:0005829">
    <property type="term" value="C:cytosol"/>
    <property type="evidence" value="ECO:0007669"/>
    <property type="project" value="TreeGrafter"/>
</dbReference>
<dbReference type="GO" id="GO:0000287">
    <property type="term" value="F:magnesium ion binding"/>
    <property type="evidence" value="ECO:0007669"/>
    <property type="project" value="UniProtKB-UniRule"/>
</dbReference>
<dbReference type="GO" id="GO:0008966">
    <property type="term" value="F:phosphoglucosamine mutase activity"/>
    <property type="evidence" value="ECO:0007669"/>
    <property type="project" value="UniProtKB-UniRule"/>
</dbReference>
<dbReference type="GO" id="GO:0004615">
    <property type="term" value="F:phosphomannomutase activity"/>
    <property type="evidence" value="ECO:0007669"/>
    <property type="project" value="TreeGrafter"/>
</dbReference>
<dbReference type="GO" id="GO:0005975">
    <property type="term" value="P:carbohydrate metabolic process"/>
    <property type="evidence" value="ECO:0007669"/>
    <property type="project" value="InterPro"/>
</dbReference>
<dbReference type="GO" id="GO:0009252">
    <property type="term" value="P:peptidoglycan biosynthetic process"/>
    <property type="evidence" value="ECO:0007669"/>
    <property type="project" value="TreeGrafter"/>
</dbReference>
<dbReference type="GO" id="GO:0006048">
    <property type="term" value="P:UDP-N-acetylglucosamine biosynthetic process"/>
    <property type="evidence" value="ECO:0007669"/>
    <property type="project" value="TreeGrafter"/>
</dbReference>
<dbReference type="CDD" id="cd05802">
    <property type="entry name" value="GlmM"/>
    <property type="match status" value="1"/>
</dbReference>
<dbReference type="FunFam" id="3.30.310.50:FF:000001">
    <property type="entry name" value="Phosphoglucosamine mutase"/>
    <property type="match status" value="1"/>
</dbReference>
<dbReference type="FunFam" id="3.40.120.10:FF:000001">
    <property type="entry name" value="Phosphoglucosamine mutase"/>
    <property type="match status" value="1"/>
</dbReference>
<dbReference type="FunFam" id="3.40.120.10:FF:000002">
    <property type="entry name" value="Phosphoglucosamine mutase"/>
    <property type="match status" value="1"/>
</dbReference>
<dbReference type="Gene3D" id="3.40.120.10">
    <property type="entry name" value="Alpha-D-Glucose-1,6-Bisphosphate, subunit A, domain 3"/>
    <property type="match status" value="3"/>
</dbReference>
<dbReference type="Gene3D" id="3.30.310.50">
    <property type="entry name" value="Alpha-D-phosphohexomutase, C-terminal domain"/>
    <property type="match status" value="1"/>
</dbReference>
<dbReference type="HAMAP" id="MF_01554_B">
    <property type="entry name" value="GlmM_B"/>
    <property type="match status" value="1"/>
</dbReference>
<dbReference type="InterPro" id="IPR005844">
    <property type="entry name" value="A-D-PHexomutase_a/b/a-I"/>
</dbReference>
<dbReference type="InterPro" id="IPR016055">
    <property type="entry name" value="A-D-PHexomutase_a/b/a-I/II/III"/>
</dbReference>
<dbReference type="InterPro" id="IPR005845">
    <property type="entry name" value="A-D-PHexomutase_a/b/a-II"/>
</dbReference>
<dbReference type="InterPro" id="IPR005846">
    <property type="entry name" value="A-D-PHexomutase_a/b/a-III"/>
</dbReference>
<dbReference type="InterPro" id="IPR005843">
    <property type="entry name" value="A-D-PHexomutase_C"/>
</dbReference>
<dbReference type="InterPro" id="IPR036900">
    <property type="entry name" value="A-D-PHexomutase_C_sf"/>
</dbReference>
<dbReference type="InterPro" id="IPR016066">
    <property type="entry name" value="A-D-PHexomutase_CS"/>
</dbReference>
<dbReference type="InterPro" id="IPR005841">
    <property type="entry name" value="Alpha-D-phosphohexomutase_SF"/>
</dbReference>
<dbReference type="InterPro" id="IPR006352">
    <property type="entry name" value="GlmM_bact"/>
</dbReference>
<dbReference type="InterPro" id="IPR050060">
    <property type="entry name" value="Phosphoglucosamine_mutase"/>
</dbReference>
<dbReference type="NCBIfam" id="TIGR01455">
    <property type="entry name" value="glmM"/>
    <property type="match status" value="1"/>
</dbReference>
<dbReference type="NCBIfam" id="NF008139">
    <property type="entry name" value="PRK10887.1"/>
    <property type="match status" value="1"/>
</dbReference>
<dbReference type="PANTHER" id="PTHR42946:SF1">
    <property type="entry name" value="PHOSPHOGLUCOMUTASE (ALPHA-D-GLUCOSE-1,6-BISPHOSPHATE-DEPENDENT)"/>
    <property type="match status" value="1"/>
</dbReference>
<dbReference type="PANTHER" id="PTHR42946">
    <property type="entry name" value="PHOSPHOHEXOSE MUTASE"/>
    <property type="match status" value="1"/>
</dbReference>
<dbReference type="Pfam" id="PF02878">
    <property type="entry name" value="PGM_PMM_I"/>
    <property type="match status" value="1"/>
</dbReference>
<dbReference type="Pfam" id="PF02879">
    <property type="entry name" value="PGM_PMM_II"/>
    <property type="match status" value="1"/>
</dbReference>
<dbReference type="Pfam" id="PF02880">
    <property type="entry name" value="PGM_PMM_III"/>
    <property type="match status" value="1"/>
</dbReference>
<dbReference type="Pfam" id="PF00408">
    <property type="entry name" value="PGM_PMM_IV"/>
    <property type="match status" value="1"/>
</dbReference>
<dbReference type="PRINTS" id="PR00509">
    <property type="entry name" value="PGMPMM"/>
</dbReference>
<dbReference type="SUPFAM" id="SSF55957">
    <property type="entry name" value="Phosphoglucomutase, C-terminal domain"/>
    <property type="match status" value="1"/>
</dbReference>
<dbReference type="SUPFAM" id="SSF53738">
    <property type="entry name" value="Phosphoglucomutase, first 3 domains"/>
    <property type="match status" value="3"/>
</dbReference>
<dbReference type="PROSITE" id="PS00710">
    <property type="entry name" value="PGM_PMM"/>
    <property type="match status" value="1"/>
</dbReference>
<name>GLMM_BACCZ</name>
<evidence type="ECO:0000255" key="1">
    <source>
        <dbReference type="HAMAP-Rule" id="MF_01554"/>
    </source>
</evidence>
<sequence>MGKYFGTDGVRGVANKELTPELAFKIGRFGGYVLTKDTDRPKVIIGRDTRISGHMLEGALVAGLLSTGAEVMRLGVISTPGVAYLTKALDAQAGVMISASHNPVQDNGIKFFGSDGFKLTDEQEAEIEALLDKEVDELPRPTGTNLGQVSDYFEGGQKYLQYIKQTVEEDFSGLHIALDCAHGATSSLAPYLFADLEADISTMGTSPNGMNINDGVGSTHPEVLAELVKEKGADIGLAFDGDGDRLIAVDEKGNIVDGDQIMFICAKYMKETGQLKHNTVVSTVMSNLGFYKALEANGITSDKTAVGDRYVMEEMKRGGYNLGGEQSGHIILLDYITTGDGMLSALQLVNIMKMTKKPLSELAGEMTKFPQLLVNVRVTDKKLALENEKIKEIIRVVEEEMNGDGRILVRPSGTEPLIRVMAEAPTQEVCDAYVHRIVEVVKAEVGAE</sequence>
<keyword id="KW-0413">Isomerase</keyword>
<keyword id="KW-0460">Magnesium</keyword>
<keyword id="KW-0479">Metal-binding</keyword>
<keyword id="KW-0597">Phosphoprotein</keyword>
<gene>
    <name evidence="1" type="primary">glmM</name>
    <name type="ordered locus">BCE33L0150</name>
</gene>
<accession>Q63H45</accession>
<proteinExistence type="inferred from homology"/>
<reference key="1">
    <citation type="journal article" date="2006" name="J. Bacteriol.">
        <title>Pathogenomic sequence analysis of Bacillus cereus and Bacillus thuringiensis isolates closely related to Bacillus anthracis.</title>
        <authorList>
            <person name="Han C.S."/>
            <person name="Xie G."/>
            <person name="Challacombe J.F."/>
            <person name="Altherr M.R."/>
            <person name="Bhotika S.S."/>
            <person name="Bruce D."/>
            <person name="Campbell C.S."/>
            <person name="Campbell M.L."/>
            <person name="Chen J."/>
            <person name="Chertkov O."/>
            <person name="Cleland C."/>
            <person name="Dimitrijevic M."/>
            <person name="Doggett N.A."/>
            <person name="Fawcett J.J."/>
            <person name="Glavina T."/>
            <person name="Goodwin L.A."/>
            <person name="Hill K.K."/>
            <person name="Hitchcock P."/>
            <person name="Jackson P.J."/>
            <person name="Keim P."/>
            <person name="Kewalramani A.R."/>
            <person name="Longmire J."/>
            <person name="Lucas S."/>
            <person name="Malfatti S."/>
            <person name="McMurry K."/>
            <person name="Meincke L.J."/>
            <person name="Misra M."/>
            <person name="Moseman B.L."/>
            <person name="Mundt M."/>
            <person name="Munk A.C."/>
            <person name="Okinaka R.T."/>
            <person name="Parson-Quintana B."/>
            <person name="Reilly L.P."/>
            <person name="Richardson P."/>
            <person name="Robinson D.L."/>
            <person name="Rubin E."/>
            <person name="Saunders E."/>
            <person name="Tapia R."/>
            <person name="Tesmer J.G."/>
            <person name="Thayer N."/>
            <person name="Thompson L.S."/>
            <person name="Tice H."/>
            <person name="Ticknor L.O."/>
            <person name="Wills P.L."/>
            <person name="Brettin T.S."/>
            <person name="Gilna P."/>
        </authorList>
    </citation>
    <scope>NUCLEOTIDE SEQUENCE [LARGE SCALE GENOMIC DNA]</scope>
    <source>
        <strain>ZK / E33L</strain>
    </source>
</reference>
<protein>
    <recommendedName>
        <fullName evidence="1">Phosphoglucosamine mutase</fullName>
        <ecNumber evidence="1">5.4.2.10</ecNumber>
    </recommendedName>
</protein>
<comment type="function">
    <text evidence="1">Catalyzes the conversion of glucosamine-6-phosphate to glucosamine-1-phosphate.</text>
</comment>
<comment type="catalytic activity">
    <reaction evidence="1">
        <text>alpha-D-glucosamine 1-phosphate = D-glucosamine 6-phosphate</text>
        <dbReference type="Rhea" id="RHEA:23424"/>
        <dbReference type="ChEBI" id="CHEBI:58516"/>
        <dbReference type="ChEBI" id="CHEBI:58725"/>
        <dbReference type="EC" id="5.4.2.10"/>
    </reaction>
</comment>
<comment type="cofactor">
    <cofactor evidence="1">
        <name>Mg(2+)</name>
        <dbReference type="ChEBI" id="CHEBI:18420"/>
    </cofactor>
    <text evidence="1">Binds 1 Mg(2+) ion per subunit.</text>
</comment>
<comment type="PTM">
    <text evidence="1">Activated by phosphorylation.</text>
</comment>
<comment type="similarity">
    <text evidence="1">Belongs to the phosphohexose mutase family.</text>
</comment>